<accession>A7QBZ2</accession>
<accession>D7TAG9</accession>
<comment type="subunit">
    <text evidence="1">Homodimer and heterodimers.</text>
</comment>
<comment type="subcellular location">
    <subcellularLocation>
        <location evidence="1">Cell membrane</location>
        <topology evidence="1">Multi-pass membrane protein</topology>
    </subcellularLocation>
</comment>
<comment type="similarity">
    <text evidence="3">Belongs to the Casparian strip membrane proteins (CASP) family.</text>
</comment>
<comment type="sequence caution" evidence="3">
    <conflict type="erroneous initiation">
        <sequence resource="EMBL-CDS" id="CBI27492"/>
    </conflict>
    <text>Truncated N-terminus.</text>
</comment>
<evidence type="ECO:0000250" key="1"/>
<evidence type="ECO:0000255" key="2"/>
<evidence type="ECO:0000305" key="3"/>
<protein>
    <recommendedName>
        <fullName>CASP-like protein 2A1</fullName>
        <shortName>VvCASPL2A1</shortName>
    </recommendedName>
</protein>
<keyword id="KW-1003">Cell membrane</keyword>
<keyword id="KW-0472">Membrane</keyword>
<keyword id="KW-1185">Reference proteome</keyword>
<keyword id="KW-0812">Transmembrane</keyword>
<keyword id="KW-1133">Transmembrane helix</keyword>
<feature type="chain" id="PRO_0000370312" description="CASP-like protein 2A1">
    <location>
        <begin position="1"/>
        <end position="205"/>
    </location>
</feature>
<feature type="topological domain" description="Cytoplasmic" evidence="2">
    <location>
        <begin position="1"/>
        <end position="35"/>
    </location>
</feature>
<feature type="transmembrane region" description="Helical" evidence="2">
    <location>
        <begin position="36"/>
        <end position="56"/>
    </location>
</feature>
<feature type="topological domain" description="Extracellular" evidence="2">
    <location>
        <begin position="57"/>
        <end position="77"/>
    </location>
</feature>
<feature type="transmembrane region" description="Helical" evidence="2">
    <location>
        <begin position="78"/>
        <end position="98"/>
    </location>
</feature>
<feature type="topological domain" description="Cytoplasmic" evidence="2">
    <location>
        <begin position="99"/>
        <end position="106"/>
    </location>
</feature>
<feature type="transmembrane region" description="Helical" evidence="2">
    <location>
        <begin position="107"/>
        <end position="127"/>
    </location>
</feature>
<feature type="topological domain" description="Extracellular" evidence="2">
    <location>
        <begin position="128"/>
        <end position="157"/>
    </location>
</feature>
<feature type="transmembrane region" description="Helical" evidence="2">
    <location>
        <begin position="158"/>
        <end position="178"/>
    </location>
</feature>
<feature type="topological domain" description="Cytoplasmic" evidence="2">
    <location>
        <begin position="179"/>
        <end position="205"/>
    </location>
</feature>
<gene>
    <name type="ordered locus">VIT_01s0010g01870</name>
    <name type="ORF">GSVIVT00035166001</name>
    <name type="ORF">GSVIVT01010256001</name>
    <name type="ORF">VIT_00010256001</name>
    <name type="ORF">Vv01s0010g01870</name>
</gene>
<reference key="1">
    <citation type="journal article" date="2007" name="Nature">
        <title>The grapevine genome sequence suggests ancestral hexaploidization in major angiosperm phyla.</title>
        <authorList>
            <person name="Jaillon O."/>
            <person name="Aury J.-M."/>
            <person name="Noel B."/>
            <person name="Policriti A."/>
            <person name="Clepet C."/>
            <person name="Casagrande A."/>
            <person name="Choisne N."/>
            <person name="Aubourg S."/>
            <person name="Vitulo N."/>
            <person name="Jubin C."/>
            <person name="Vezzi A."/>
            <person name="Legeai F."/>
            <person name="Hugueney P."/>
            <person name="Dasilva C."/>
            <person name="Horner D."/>
            <person name="Mica E."/>
            <person name="Jublot D."/>
            <person name="Poulain J."/>
            <person name="Bruyere C."/>
            <person name="Billault A."/>
            <person name="Segurens B."/>
            <person name="Gouyvenoux M."/>
            <person name="Ugarte E."/>
            <person name="Cattonaro F."/>
            <person name="Anthouard V."/>
            <person name="Vico V."/>
            <person name="Del Fabbro C."/>
            <person name="Alaux M."/>
            <person name="Di Gaspero G."/>
            <person name="Dumas V."/>
            <person name="Felice N."/>
            <person name="Paillard S."/>
            <person name="Juman I."/>
            <person name="Moroldo M."/>
            <person name="Scalabrin S."/>
            <person name="Canaguier A."/>
            <person name="Le Clainche I."/>
            <person name="Malacrida G."/>
            <person name="Durand E."/>
            <person name="Pesole G."/>
            <person name="Laucou V."/>
            <person name="Chatelet P."/>
            <person name="Merdinoglu D."/>
            <person name="Delledonne M."/>
            <person name="Pezzotti M."/>
            <person name="Lecharny A."/>
            <person name="Scarpelli C."/>
            <person name="Artiguenave F."/>
            <person name="Pe M.E."/>
            <person name="Valle G."/>
            <person name="Morgante M."/>
            <person name="Caboche M."/>
            <person name="Adam-Blondon A.-F."/>
            <person name="Weissenbach J."/>
            <person name="Quetier F."/>
            <person name="Wincker P."/>
        </authorList>
    </citation>
    <scope>NUCLEOTIDE SEQUENCE [LARGE SCALE GENOMIC DNA]</scope>
    <source>
        <strain>cv. Pinot noir / PN40024</strain>
    </source>
</reference>
<reference key="2">
    <citation type="submission" date="2006-07" db="EMBL/GenBank/DDBJ databases">
        <title>Expressed sequence tags from grapevine (Vitis vinifera cv. Cabernet Sauvignon).</title>
        <authorList>
            <person name="Reid K.E."/>
            <person name="Liao N."/>
            <person name="Peng F."/>
            <person name="Schlosser J."/>
            <person name="Kirkpatrick R."/>
            <person name="Shukin R."/>
            <person name="Barber S."/>
            <person name="Holt R."/>
            <person name="Siddiqui A."/>
            <person name="Jones S."/>
            <person name="Marra M."/>
            <person name="Bowen P."/>
            <person name="Bohlmann J."/>
            <person name="Martinez Zapater J.M."/>
            <person name="Lund S.T."/>
        </authorList>
    </citation>
    <scope>NUCLEOTIDE SEQUENCE [LARGE SCALE MRNA]</scope>
    <source>
        <strain>cv. Cabernet Sauvignon</strain>
        <tissue>Seed</tissue>
    </source>
</reference>
<reference key="3">
    <citation type="journal article" date="2014" name="Plant Physiol.">
        <title>Functional and evolutionary analysis of the CASPARIAN STRIP MEMBRANE DOMAIN PROTEIN family.</title>
        <authorList>
            <person name="Roppolo D."/>
            <person name="Boeckmann B."/>
            <person name="Pfister A."/>
            <person name="Boutet E."/>
            <person name="Rubio M.C."/>
            <person name="Denervaud-Tendon V."/>
            <person name="Vermeer J.E."/>
            <person name="Gheyselinck J."/>
            <person name="Xenarios I."/>
            <person name="Geldner N."/>
        </authorList>
    </citation>
    <scope>GENE FAMILY</scope>
    <scope>NOMENCLATURE</scope>
</reference>
<sequence length="205" mass="21968">MMGDKGEKECATASSPIELGCGEGDESGNKSSMRTVETLLRLVPVALCTVSLVVMLKNSQTNDFGSLSYSDLGAFRYLVHANGICAGYSLLSAIFTAMPRPPTMSRAWTFFLLDQVLTYLILAAGAVSTEVVYLAYKGDEAVTWSDACSSFGGFCQKTTASISITFVTVLCYAVLSLISSYKLFSKYDAPICFNGKGIEIAAFHS</sequence>
<dbReference type="EMBL" id="FN595754">
    <property type="protein sequence ID" value="CBI27492.3"/>
    <property type="status" value="ALT_INIT"/>
    <property type="molecule type" value="Genomic_DNA"/>
</dbReference>
<dbReference type="EMBL" id="FN597015">
    <property type="status" value="NOT_ANNOTATED_CDS"/>
    <property type="molecule type" value="Genomic_DNA"/>
</dbReference>
<dbReference type="EMBL" id="EC963598">
    <property type="status" value="NOT_ANNOTATED_CDS"/>
    <property type="molecule type" value="mRNA"/>
</dbReference>
<dbReference type="RefSeq" id="XP_002275339.1">
    <property type="nucleotide sequence ID" value="XM_002275303.4"/>
</dbReference>
<dbReference type="FunCoup" id="A7QBZ2">
    <property type="interactions" value="759"/>
</dbReference>
<dbReference type="PaxDb" id="29760-VIT_01s0010g01870.t01"/>
<dbReference type="EnsemblPlants" id="Vitvi01g01460_t001">
    <property type="protein sequence ID" value="Vitvi01g01460_P001"/>
    <property type="gene ID" value="Vitvi01g01460"/>
</dbReference>
<dbReference type="Gramene" id="Vitvi01g01460_t001">
    <property type="protein sequence ID" value="Vitvi01g01460_P001"/>
    <property type="gene ID" value="Vitvi01g01460"/>
</dbReference>
<dbReference type="eggNOG" id="ENOG502S0J7">
    <property type="taxonomic scope" value="Eukaryota"/>
</dbReference>
<dbReference type="HOGENOM" id="CLU_066104_2_3_1"/>
<dbReference type="InParanoid" id="A7QBZ2"/>
<dbReference type="OrthoDB" id="749363at2759"/>
<dbReference type="Proteomes" id="UP000009183">
    <property type="component" value="Chromosome 1"/>
</dbReference>
<dbReference type="GO" id="GO:0005886">
    <property type="term" value="C:plasma membrane"/>
    <property type="evidence" value="ECO:0007669"/>
    <property type="project" value="UniProtKB-SubCell"/>
</dbReference>
<dbReference type="InterPro" id="IPR006459">
    <property type="entry name" value="CASP/CASPL"/>
</dbReference>
<dbReference type="InterPro" id="IPR006702">
    <property type="entry name" value="CASP_dom"/>
</dbReference>
<dbReference type="NCBIfam" id="TIGR01569">
    <property type="entry name" value="A_tha_TIGR01569"/>
    <property type="match status" value="1"/>
</dbReference>
<dbReference type="PANTHER" id="PTHR33573:SF46">
    <property type="entry name" value="CASP-LIKE PROTEIN 2A1"/>
    <property type="match status" value="1"/>
</dbReference>
<dbReference type="PANTHER" id="PTHR33573">
    <property type="entry name" value="CASP-LIKE PROTEIN 4A4"/>
    <property type="match status" value="1"/>
</dbReference>
<dbReference type="Pfam" id="PF04535">
    <property type="entry name" value="CASP_dom"/>
    <property type="match status" value="1"/>
</dbReference>
<organism>
    <name type="scientific">Vitis vinifera</name>
    <name type="common">Grape</name>
    <dbReference type="NCBI Taxonomy" id="29760"/>
    <lineage>
        <taxon>Eukaryota</taxon>
        <taxon>Viridiplantae</taxon>
        <taxon>Streptophyta</taxon>
        <taxon>Embryophyta</taxon>
        <taxon>Tracheophyta</taxon>
        <taxon>Spermatophyta</taxon>
        <taxon>Magnoliopsida</taxon>
        <taxon>eudicotyledons</taxon>
        <taxon>Gunneridae</taxon>
        <taxon>Pentapetalae</taxon>
        <taxon>rosids</taxon>
        <taxon>Vitales</taxon>
        <taxon>Vitaceae</taxon>
        <taxon>Viteae</taxon>
        <taxon>Vitis</taxon>
    </lineage>
</organism>
<name>CSPLA_VITVI</name>
<proteinExistence type="evidence at transcript level"/>